<keyword id="KW-0119">Carbohydrate metabolism</keyword>
<keyword id="KW-0479">Metal-binding</keyword>
<keyword id="KW-0520">NAD</keyword>
<keyword id="KW-0560">Oxidoreductase</keyword>
<keyword id="KW-1185">Reference proteome</keyword>
<keyword id="KW-0859">Xylose metabolism</keyword>
<keyword id="KW-0862">Zinc</keyword>
<reference key="1">
    <citation type="journal article" date="2005" name="Nature">
        <title>Genomic sequence of the pathogenic and allergenic filamentous fungus Aspergillus fumigatus.</title>
        <authorList>
            <person name="Nierman W.C."/>
            <person name="Pain A."/>
            <person name="Anderson M.J."/>
            <person name="Wortman J.R."/>
            <person name="Kim H.S."/>
            <person name="Arroyo J."/>
            <person name="Berriman M."/>
            <person name="Abe K."/>
            <person name="Archer D.B."/>
            <person name="Bermejo C."/>
            <person name="Bennett J.W."/>
            <person name="Bowyer P."/>
            <person name="Chen D."/>
            <person name="Collins M."/>
            <person name="Coulsen R."/>
            <person name="Davies R."/>
            <person name="Dyer P.S."/>
            <person name="Farman M.L."/>
            <person name="Fedorova N."/>
            <person name="Fedorova N.D."/>
            <person name="Feldblyum T.V."/>
            <person name="Fischer R."/>
            <person name="Fosker N."/>
            <person name="Fraser A."/>
            <person name="Garcia J.L."/>
            <person name="Garcia M.J."/>
            <person name="Goble A."/>
            <person name="Goldman G.H."/>
            <person name="Gomi K."/>
            <person name="Griffith-Jones S."/>
            <person name="Gwilliam R."/>
            <person name="Haas B.J."/>
            <person name="Haas H."/>
            <person name="Harris D.E."/>
            <person name="Horiuchi H."/>
            <person name="Huang J."/>
            <person name="Humphray S."/>
            <person name="Jimenez J."/>
            <person name="Keller N."/>
            <person name="Khouri H."/>
            <person name="Kitamoto K."/>
            <person name="Kobayashi T."/>
            <person name="Konzack S."/>
            <person name="Kulkarni R."/>
            <person name="Kumagai T."/>
            <person name="Lafton A."/>
            <person name="Latge J.-P."/>
            <person name="Li W."/>
            <person name="Lord A."/>
            <person name="Lu C."/>
            <person name="Majoros W.H."/>
            <person name="May G.S."/>
            <person name="Miller B.L."/>
            <person name="Mohamoud Y."/>
            <person name="Molina M."/>
            <person name="Monod M."/>
            <person name="Mouyna I."/>
            <person name="Mulligan S."/>
            <person name="Murphy L.D."/>
            <person name="O'Neil S."/>
            <person name="Paulsen I."/>
            <person name="Penalva M.A."/>
            <person name="Pertea M."/>
            <person name="Price C."/>
            <person name="Pritchard B.L."/>
            <person name="Quail M.A."/>
            <person name="Rabbinowitsch E."/>
            <person name="Rawlins N."/>
            <person name="Rajandream M.A."/>
            <person name="Reichard U."/>
            <person name="Renauld H."/>
            <person name="Robson G.D."/>
            <person name="Rodriguez de Cordoba S."/>
            <person name="Rodriguez-Pena J.M."/>
            <person name="Ronning C.M."/>
            <person name="Rutter S."/>
            <person name="Salzberg S.L."/>
            <person name="Sanchez M."/>
            <person name="Sanchez-Ferrero J.C."/>
            <person name="Saunders D."/>
            <person name="Seeger K."/>
            <person name="Squares R."/>
            <person name="Squares S."/>
            <person name="Takeuchi M."/>
            <person name="Tekaia F."/>
            <person name="Turner G."/>
            <person name="Vazquez de Aldana C.R."/>
            <person name="Weidman J."/>
            <person name="White O."/>
            <person name="Woodward J.R."/>
            <person name="Yu J.-H."/>
            <person name="Fraser C.M."/>
            <person name="Galagan J.E."/>
            <person name="Asai K."/>
            <person name="Machida M."/>
            <person name="Hall N."/>
            <person name="Barrell B.G."/>
            <person name="Denning D.W."/>
        </authorList>
    </citation>
    <scope>NUCLEOTIDE SEQUENCE [LARGE SCALE GENOMIC DNA]</scope>
    <source>
        <strain>ATCC MYA-4609 / CBS 101355 / FGSC A1100 / Af293</strain>
    </source>
</reference>
<name>XYL2_ASPFU</name>
<feature type="chain" id="PRO_0000393508" description="Probable D-xylulose reductase A">
    <location>
        <begin position="1"/>
        <end position="358"/>
    </location>
</feature>
<feature type="binding site" evidence="1">
    <location>
        <position position="47"/>
    </location>
    <ligand>
        <name>Zn(2+)</name>
        <dbReference type="ChEBI" id="CHEBI:29105"/>
        <note>catalytic</note>
    </ligand>
</feature>
<feature type="binding site" evidence="1">
    <location>
        <position position="72"/>
    </location>
    <ligand>
        <name>Zn(2+)</name>
        <dbReference type="ChEBI" id="CHEBI:29105"/>
        <note>catalytic</note>
    </ligand>
</feature>
<feature type="binding site" evidence="1">
    <location>
        <position position="73"/>
    </location>
    <ligand>
        <name>Zn(2+)</name>
        <dbReference type="ChEBI" id="CHEBI:29105"/>
        <note>catalytic</note>
    </ligand>
</feature>
<feature type="binding site" evidence="2">
    <location>
        <begin position="182"/>
        <end position="187"/>
    </location>
    <ligand>
        <name>NAD(+)</name>
        <dbReference type="ChEBI" id="CHEBI:57540"/>
    </ligand>
</feature>
<sequence>MSKSTATAQNLSFVLEGIHQVKFEDRPIPELKDPHDVLVNVKFTGICGSDVHYWEHGSIGQFVVKGPMVLGHESSGVISKVGSAVTGLKVGDRVAMEPGIPCRRCEPCKAGKYNLCEKMAFAATPPYDGTLAKFYVLPEDFCYKLPDNISLQEGALMEPLGVAVHIVKQASVTPGQSVIVFGAGPVGLLCCAVAKAFGAAKIIAVDIQKARLDFAKKYAATSTFEPAKVSAVDNADRLRKENNLGVGADVVIDASGAEPSVHTGIHVLRPGGTYVQGGMGRSEIMFPIMAACTKELAIKGSFRYGSGDYNLAVGLVASGKVNVKDLITGVVEFHDAEQAFKEVKAGKGIKTLIAGIQD</sequence>
<gene>
    <name type="primary">xdhA</name>
    <name type="ORF">AFUA_7G02550</name>
</gene>
<comment type="function">
    <text evidence="1">Xylitol dehydrogenase which catalyzes the conversion of xylitol to D-xylulose. Xylose is a major component of hemicelluloses such as xylan. Most fungi utilize D-xylose via three enzymatic reactions, xylose reductase (XR), xylitol dehydrogenase (XDH), and xylulokinase, to form xylulose 5-phosphate, which enters pentose phosphate pathway (By similarity).</text>
</comment>
<comment type="catalytic activity">
    <reaction>
        <text>xylitol + NAD(+) = D-xylulose + NADH + H(+)</text>
        <dbReference type="Rhea" id="RHEA:20433"/>
        <dbReference type="ChEBI" id="CHEBI:15378"/>
        <dbReference type="ChEBI" id="CHEBI:17140"/>
        <dbReference type="ChEBI" id="CHEBI:17151"/>
        <dbReference type="ChEBI" id="CHEBI:57540"/>
        <dbReference type="ChEBI" id="CHEBI:57945"/>
        <dbReference type="EC" id="1.1.1.9"/>
    </reaction>
</comment>
<comment type="cofactor">
    <cofactor evidence="1">
        <name>Zn(2+)</name>
        <dbReference type="ChEBI" id="CHEBI:29105"/>
    </cofactor>
    <text evidence="1">Binds 1 zinc ion per subunit.</text>
</comment>
<comment type="pathway">
    <text>Carbohydrate degradation; L-arabinose degradation via L-arabinitol; D-xylulose 5-phosphate from L-arabinose (fungal route): step 4/5.</text>
</comment>
<comment type="similarity">
    <text evidence="3">Belongs to the zinc-containing alcohol dehydrogenase family.</text>
</comment>
<comment type="sequence caution" evidence="3">
    <conflict type="erroneous gene model prediction">
        <sequence resource="EMBL-CDS" id="EAL84639"/>
    </conflict>
</comment>
<protein>
    <recommendedName>
        <fullName>Probable D-xylulose reductase A</fullName>
        <ecNumber>1.1.1.9</ecNumber>
    </recommendedName>
    <alternativeName>
        <fullName>Xylitol dehydrogenase A</fullName>
    </alternativeName>
</protein>
<proteinExistence type="inferred from homology"/>
<accession>Q4WAU7</accession>
<organism>
    <name type="scientific">Aspergillus fumigatus (strain ATCC MYA-4609 / CBS 101355 / FGSC A1100 / Af293)</name>
    <name type="common">Neosartorya fumigata</name>
    <dbReference type="NCBI Taxonomy" id="330879"/>
    <lineage>
        <taxon>Eukaryota</taxon>
        <taxon>Fungi</taxon>
        <taxon>Dikarya</taxon>
        <taxon>Ascomycota</taxon>
        <taxon>Pezizomycotina</taxon>
        <taxon>Eurotiomycetes</taxon>
        <taxon>Eurotiomycetidae</taxon>
        <taxon>Eurotiales</taxon>
        <taxon>Aspergillaceae</taxon>
        <taxon>Aspergillus</taxon>
        <taxon>Aspergillus subgen. Fumigati</taxon>
    </lineage>
</organism>
<dbReference type="EC" id="1.1.1.9"/>
<dbReference type="EMBL" id="AAHF01000015">
    <property type="protein sequence ID" value="EAL84639.1"/>
    <property type="status" value="ALT_SEQ"/>
    <property type="molecule type" value="Genomic_DNA"/>
</dbReference>
<dbReference type="RefSeq" id="XP_746677.1">
    <property type="nucleotide sequence ID" value="XM_741584.1"/>
</dbReference>
<dbReference type="SMR" id="Q4WAU7"/>
<dbReference type="FunCoup" id="Q4WAU7">
    <property type="interactions" value="525"/>
</dbReference>
<dbReference type="STRING" id="330879.Q4WAU7"/>
<dbReference type="GeneID" id="3504124"/>
<dbReference type="KEGG" id="afm:AFUA_7G02550"/>
<dbReference type="VEuPathDB" id="FungiDB:Afu7g02550"/>
<dbReference type="eggNOG" id="KOG0024">
    <property type="taxonomic scope" value="Eukaryota"/>
</dbReference>
<dbReference type="HOGENOM" id="CLU_026673_11_5_1"/>
<dbReference type="InParanoid" id="Q4WAU7"/>
<dbReference type="OrthoDB" id="3941538at2759"/>
<dbReference type="UniPathway" id="UPA00146">
    <property type="reaction ID" value="UER00577"/>
</dbReference>
<dbReference type="Proteomes" id="UP000002530">
    <property type="component" value="Chromosome 7"/>
</dbReference>
<dbReference type="GO" id="GO:0046526">
    <property type="term" value="F:D-xylulose reductase activity"/>
    <property type="evidence" value="ECO:0007669"/>
    <property type="project" value="UniProtKB-EC"/>
</dbReference>
<dbReference type="GO" id="GO:0003939">
    <property type="term" value="F:L-iditol 2-dehydrogenase (NAD+) activity"/>
    <property type="evidence" value="ECO:0000318"/>
    <property type="project" value="GO_Central"/>
</dbReference>
<dbReference type="GO" id="GO:0008270">
    <property type="term" value="F:zinc ion binding"/>
    <property type="evidence" value="ECO:0007669"/>
    <property type="project" value="InterPro"/>
</dbReference>
<dbReference type="GO" id="GO:0042732">
    <property type="term" value="P:D-xylose metabolic process"/>
    <property type="evidence" value="ECO:0007669"/>
    <property type="project" value="UniProtKB-KW"/>
</dbReference>
<dbReference type="GO" id="GO:0019569">
    <property type="term" value="P:L-arabinose catabolic process to xylulose 5-phosphate"/>
    <property type="evidence" value="ECO:0007669"/>
    <property type="project" value="UniProtKB-UniPathway"/>
</dbReference>
<dbReference type="GO" id="GO:0006062">
    <property type="term" value="P:sorbitol catabolic process"/>
    <property type="evidence" value="ECO:0000318"/>
    <property type="project" value="GO_Central"/>
</dbReference>
<dbReference type="CDD" id="cd05285">
    <property type="entry name" value="sorbitol_DH"/>
    <property type="match status" value="1"/>
</dbReference>
<dbReference type="FunFam" id="3.40.50.720:FF:000068">
    <property type="entry name" value="Sorbitol dehydrogenase"/>
    <property type="match status" value="1"/>
</dbReference>
<dbReference type="Gene3D" id="3.90.180.10">
    <property type="entry name" value="Medium-chain alcohol dehydrogenases, catalytic domain"/>
    <property type="match status" value="1"/>
</dbReference>
<dbReference type="Gene3D" id="3.40.50.720">
    <property type="entry name" value="NAD(P)-binding Rossmann-like Domain"/>
    <property type="match status" value="1"/>
</dbReference>
<dbReference type="InterPro" id="IPR013149">
    <property type="entry name" value="ADH-like_C"/>
</dbReference>
<dbReference type="InterPro" id="IPR013154">
    <property type="entry name" value="ADH-like_N"/>
</dbReference>
<dbReference type="InterPro" id="IPR002328">
    <property type="entry name" value="ADH_Zn_CS"/>
</dbReference>
<dbReference type="InterPro" id="IPR011032">
    <property type="entry name" value="GroES-like_sf"/>
</dbReference>
<dbReference type="InterPro" id="IPR036291">
    <property type="entry name" value="NAD(P)-bd_dom_sf"/>
</dbReference>
<dbReference type="InterPro" id="IPR020843">
    <property type="entry name" value="PKS_ER"/>
</dbReference>
<dbReference type="InterPro" id="IPR045306">
    <property type="entry name" value="SDH-like"/>
</dbReference>
<dbReference type="PANTHER" id="PTHR43161">
    <property type="entry name" value="SORBITOL DEHYDROGENASE"/>
    <property type="match status" value="1"/>
</dbReference>
<dbReference type="PANTHER" id="PTHR43161:SF9">
    <property type="entry name" value="SORBITOL DEHYDROGENASE"/>
    <property type="match status" value="1"/>
</dbReference>
<dbReference type="Pfam" id="PF08240">
    <property type="entry name" value="ADH_N"/>
    <property type="match status" value="1"/>
</dbReference>
<dbReference type="Pfam" id="PF00107">
    <property type="entry name" value="ADH_zinc_N"/>
    <property type="match status" value="1"/>
</dbReference>
<dbReference type="SMART" id="SM00829">
    <property type="entry name" value="PKS_ER"/>
    <property type="match status" value="1"/>
</dbReference>
<dbReference type="SUPFAM" id="SSF50129">
    <property type="entry name" value="GroES-like"/>
    <property type="match status" value="1"/>
</dbReference>
<dbReference type="SUPFAM" id="SSF51735">
    <property type="entry name" value="NAD(P)-binding Rossmann-fold domains"/>
    <property type="match status" value="1"/>
</dbReference>
<dbReference type="PROSITE" id="PS00059">
    <property type="entry name" value="ADH_ZINC"/>
    <property type="match status" value="1"/>
</dbReference>
<evidence type="ECO:0000250" key="1"/>
<evidence type="ECO:0000255" key="2"/>
<evidence type="ECO:0000305" key="3"/>